<name>RL9_LISMO</name>
<dbReference type="EMBL" id="AL591973">
    <property type="protein sequence ID" value="CAC98268.1"/>
    <property type="molecule type" value="Genomic_DNA"/>
</dbReference>
<dbReference type="PIR" id="AF1081">
    <property type="entry name" value="AF1081"/>
</dbReference>
<dbReference type="RefSeq" id="NP_463586.1">
    <property type="nucleotide sequence ID" value="NC_003210.1"/>
</dbReference>
<dbReference type="RefSeq" id="WP_003724881.1">
    <property type="nucleotide sequence ID" value="NZ_CP149495.1"/>
</dbReference>
<dbReference type="SMR" id="Q8YAR2"/>
<dbReference type="STRING" id="169963.gene:17592688"/>
<dbReference type="PaxDb" id="169963-lmo0053"/>
<dbReference type="EnsemblBacteria" id="CAC98268">
    <property type="protein sequence ID" value="CAC98268"/>
    <property type="gene ID" value="CAC98268"/>
</dbReference>
<dbReference type="GeneID" id="986067"/>
<dbReference type="KEGG" id="lmo:lmo0053"/>
<dbReference type="PATRIC" id="fig|169963.11.peg.54"/>
<dbReference type="eggNOG" id="COG0359">
    <property type="taxonomic scope" value="Bacteria"/>
</dbReference>
<dbReference type="HOGENOM" id="CLU_078938_3_2_9"/>
<dbReference type="OrthoDB" id="9788336at2"/>
<dbReference type="PhylomeDB" id="Q8YAR2"/>
<dbReference type="BioCyc" id="LMON169963:LMO0053-MONOMER"/>
<dbReference type="Proteomes" id="UP000000817">
    <property type="component" value="Chromosome"/>
</dbReference>
<dbReference type="GO" id="GO:0022625">
    <property type="term" value="C:cytosolic large ribosomal subunit"/>
    <property type="evidence" value="ECO:0000318"/>
    <property type="project" value="GO_Central"/>
</dbReference>
<dbReference type="GO" id="GO:0019843">
    <property type="term" value="F:rRNA binding"/>
    <property type="evidence" value="ECO:0007669"/>
    <property type="project" value="UniProtKB-UniRule"/>
</dbReference>
<dbReference type="GO" id="GO:0003735">
    <property type="term" value="F:structural constituent of ribosome"/>
    <property type="evidence" value="ECO:0007669"/>
    <property type="project" value="InterPro"/>
</dbReference>
<dbReference type="GO" id="GO:0006412">
    <property type="term" value="P:translation"/>
    <property type="evidence" value="ECO:0007669"/>
    <property type="project" value="UniProtKB-UniRule"/>
</dbReference>
<dbReference type="FunFam" id="3.10.430.100:FF:000002">
    <property type="entry name" value="50S ribosomal protein L9"/>
    <property type="match status" value="1"/>
</dbReference>
<dbReference type="FunFam" id="3.40.5.10:FF:000002">
    <property type="entry name" value="50S ribosomal protein L9"/>
    <property type="match status" value="1"/>
</dbReference>
<dbReference type="Gene3D" id="3.10.430.100">
    <property type="entry name" value="Ribosomal protein L9, C-terminal domain"/>
    <property type="match status" value="1"/>
</dbReference>
<dbReference type="Gene3D" id="3.40.5.10">
    <property type="entry name" value="Ribosomal protein L9, N-terminal domain"/>
    <property type="match status" value="1"/>
</dbReference>
<dbReference type="HAMAP" id="MF_00503">
    <property type="entry name" value="Ribosomal_bL9"/>
    <property type="match status" value="1"/>
</dbReference>
<dbReference type="InterPro" id="IPR000244">
    <property type="entry name" value="Ribosomal_bL9"/>
</dbReference>
<dbReference type="InterPro" id="IPR009027">
    <property type="entry name" value="Ribosomal_bL9/RNase_H1_N"/>
</dbReference>
<dbReference type="InterPro" id="IPR020594">
    <property type="entry name" value="Ribosomal_bL9_bac/chp"/>
</dbReference>
<dbReference type="InterPro" id="IPR020069">
    <property type="entry name" value="Ribosomal_bL9_C"/>
</dbReference>
<dbReference type="InterPro" id="IPR036791">
    <property type="entry name" value="Ribosomal_bL9_C_sf"/>
</dbReference>
<dbReference type="InterPro" id="IPR020070">
    <property type="entry name" value="Ribosomal_bL9_N"/>
</dbReference>
<dbReference type="InterPro" id="IPR036935">
    <property type="entry name" value="Ribosomal_bL9_N_sf"/>
</dbReference>
<dbReference type="NCBIfam" id="TIGR00158">
    <property type="entry name" value="L9"/>
    <property type="match status" value="1"/>
</dbReference>
<dbReference type="PANTHER" id="PTHR21368">
    <property type="entry name" value="50S RIBOSOMAL PROTEIN L9"/>
    <property type="match status" value="1"/>
</dbReference>
<dbReference type="Pfam" id="PF03948">
    <property type="entry name" value="Ribosomal_L9_C"/>
    <property type="match status" value="1"/>
</dbReference>
<dbReference type="Pfam" id="PF01281">
    <property type="entry name" value="Ribosomal_L9_N"/>
    <property type="match status" value="1"/>
</dbReference>
<dbReference type="SUPFAM" id="SSF55658">
    <property type="entry name" value="L9 N-domain-like"/>
    <property type="match status" value="1"/>
</dbReference>
<dbReference type="SUPFAM" id="SSF55653">
    <property type="entry name" value="Ribosomal protein L9 C-domain"/>
    <property type="match status" value="1"/>
</dbReference>
<dbReference type="PROSITE" id="PS00651">
    <property type="entry name" value="RIBOSOMAL_L9"/>
    <property type="match status" value="1"/>
</dbReference>
<gene>
    <name evidence="1" type="primary">rplI</name>
    <name type="ordered locus">lmo0053</name>
</gene>
<accession>Q8YAR2</accession>
<evidence type="ECO:0000255" key="1">
    <source>
        <dbReference type="HAMAP-Rule" id="MF_00503"/>
    </source>
</evidence>
<evidence type="ECO:0000305" key="2"/>
<protein>
    <recommendedName>
        <fullName evidence="1">Large ribosomal subunit protein bL9</fullName>
    </recommendedName>
    <alternativeName>
        <fullName evidence="2">50S ribosomal protein L9</fullName>
    </alternativeName>
</protein>
<proteinExistence type="inferred from homology"/>
<organism>
    <name type="scientific">Listeria monocytogenes serovar 1/2a (strain ATCC BAA-679 / EGD-e)</name>
    <dbReference type="NCBI Taxonomy" id="169963"/>
    <lineage>
        <taxon>Bacteria</taxon>
        <taxon>Bacillati</taxon>
        <taxon>Bacillota</taxon>
        <taxon>Bacilli</taxon>
        <taxon>Bacillales</taxon>
        <taxon>Listeriaceae</taxon>
        <taxon>Listeria</taxon>
    </lineage>
</organism>
<keyword id="KW-1185">Reference proteome</keyword>
<keyword id="KW-0687">Ribonucleoprotein</keyword>
<keyword id="KW-0689">Ribosomal protein</keyword>
<keyword id="KW-0694">RNA-binding</keyword>
<keyword id="KW-0699">rRNA-binding</keyword>
<sequence length="148" mass="16164">MKVIFLKDVKGKGKKGETKNVADGYANNFLIKNGYAVEANNAALSTLSAQKKKEDKLAAEELAEAKALKEKMENLTVELKAKSGEGGRLFGSITSKQIAQTLEKTHGIKIDKRKMDLPEAIRALGHTKVPVKLHHEVTATLDVHVSEE</sequence>
<feature type="chain" id="PRO_0000176650" description="Large ribosomal subunit protein bL9">
    <location>
        <begin position="1"/>
        <end position="148"/>
    </location>
</feature>
<comment type="function">
    <text evidence="1">Binds to the 23S rRNA.</text>
</comment>
<comment type="similarity">
    <text evidence="1">Belongs to the bacterial ribosomal protein bL9 family.</text>
</comment>
<reference key="1">
    <citation type="journal article" date="2001" name="Science">
        <title>Comparative genomics of Listeria species.</title>
        <authorList>
            <person name="Glaser P."/>
            <person name="Frangeul L."/>
            <person name="Buchrieser C."/>
            <person name="Rusniok C."/>
            <person name="Amend A."/>
            <person name="Baquero F."/>
            <person name="Berche P."/>
            <person name="Bloecker H."/>
            <person name="Brandt P."/>
            <person name="Chakraborty T."/>
            <person name="Charbit A."/>
            <person name="Chetouani F."/>
            <person name="Couve E."/>
            <person name="de Daruvar A."/>
            <person name="Dehoux P."/>
            <person name="Domann E."/>
            <person name="Dominguez-Bernal G."/>
            <person name="Duchaud E."/>
            <person name="Durant L."/>
            <person name="Dussurget O."/>
            <person name="Entian K.-D."/>
            <person name="Fsihi H."/>
            <person name="Garcia-del Portillo F."/>
            <person name="Garrido P."/>
            <person name="Gautier L."/>
            <person name="Goebel W."/>
            <person name="Gomez-Lopez N."/>
            <person name="Hain T."/>
            <person name="Hauf J."/>
            <person name="Jackson D."/>
            <person name="Jones L.-M."/>
            <person name="Kaerst U."/>
            <person name="Kreft J."/>
            <person name="Kuhn M."/>
            <person name="Kunst F."/>
            <person name="Kurapkat G."/>
            <person name="Madueno E."/>
            <person name="Maitournam A."/>
            <person name="Mata Vicente J."/>
            <person name="Ng E."/>
            <person name="Nedjari H."/>
            <person name="Nordsiek G."/>
            <person name="Novella S."/>
            <person name="de Pablos B."/>
            <person name="Perez-Diaz J.-C."/>
            <person name="Purcell R."/>
            <person name="Remmel B."/>
            <person name="Rose M."/>
            <person name="Schlueter T."/>
            <person name="Simoes N."/>
            <person name="Tierrez A."/>
            <person name="Vazquez-Boland J.-A."/>
            <person name="Voss H."/>
            <person name="Wehland J."/>
            <person name="Cossart P."/>
        </authorList>
    </citation>
    <scope>NUCLEOTIDE SEQUENCE [LARGE SCALE GENOMIC DNA]</scope>
    <source>
        <strain>ATCC BAA-679 / EGD-e</strain>
    </source>
</reference>